<protein>
    <recommendedName>
        <fullName evidence="1">Probable phosphatase Sbal_1472</fullName>
        <ecNumber evidence="1">3.1.3.-</ecNumber>
    </recommendedName>
</protein>
<gene>
    <name type="ordered locus">Sbal_1472</name>
</gene>
<evidence type="ECO:0000255" key="1">
    <source>
        <dbReference type="HAMAP-Rule" id="MF_01561"/>
    </source>
</evidence>
<name>Y1472_SHEB5</name>
<sequence length="254" mass="27485">MQYQVDTHTHTVASSHAYSTIHDYIAVAKQKGIRLFANTDHGPAMADAPHFWHFVNLRVLPRMVDGVGILRGIEANIKNIDGEIDFFGDYLKQLDIVLAGFHEPVYPPSDKATHTEAMINTIKSGKVDIITHPGNPAYPIDIEAVARAAAEYGVALEINNSSFEVSRKGSEANCTAIAKAAKEFGTILVMGSDSHVAFSLGGFARAQAIIDEVAYPPSRLLNRSPSALLAFLAARGHETVADLIPLFSDDEPCC</sequence>
<proteinExistence type="inferred from homology"/>
<dbReference type="EC" id="3.1.3.-" evidence="1"/>
<dbReference type="EMBL" id="CP000563">
    <property type="protein sequence ID" value="ABN60990.1"/>
    <property type="molecule type" value="Genomic_DNA"/>
</dbReference>
<dbReference type="RefSeq" id="WP_011846364.1">
    <property type="nucleotide sequence ID" value="NC_009052.1"/>
</dbReference>
<dbReference type="SMR" id="A3D2M7"/>
<dbReference type="STRING" id="325240.Sbal_1472"/>
<dbReference type="KEGG" id="sbl:Sbal_1472"/>
<dbReference type="HOGENOM" id="CLU_061999_0_1_6"/>
<dbReference type="OrthoDB" id="9808747at2"/>
<dbReference type="Proteomes" id="UP000001557">
    <property type="component" value="Chromosome"/>
</dbReference>
<dbReference type="GO" id="GO:0005829">
    <property type="term" value="C:cytosol"/>
    <property type="evidence" value="ECO:0007669"/>
    <property type="project" value="TreeGrafter"/>
</dbReference>
<dbReference type="GO" id="GO:0016791">
    <property type="term" value="F:phosphatase activity"/>
    <property type="evidence" value="ECO:0007669"/>
    <property type="project" value="UniProtKB-UniRule"/>
</dbReference>
<dbReference type="GO" id="GO:0008270">
    <property type="term" value="F:zinc ion binding"/>
    <property type="evidence" value="ECO:0007669"/>
    <property type="project" value="UniProtKB-UniRule"/>
</dbReference>
<dbReference type="GO" id="GO:0071978">
    <property type="term" value="P:bacterial-type flagellum-dependent swarming motility"/>
    <property type="evidence" value="ECO:0007669"/>
    <property type="project" value="TreeGrafter"/>
</dbReference>
<dbReference type="CDD" id="cd07437">
    <property type="entry name" value="PHP_HisPPase_Ycdx_like"/>
    <property type="match status" value="1"/>
</dbReference>
<dbReference type="FunFam" id="3.20.20.140:FF:000008">
    <property type="entry name" value="Probable phosphatase YcdX"/>
    <property type="match status" value="1"/>
</dbReference>
<dbReference type="Gene3D" id="3.20.20.140">
    <property type="entry name" value="Metal-dependent hydrolases"/>
    <property type="match status" value="1"/>
</dbReference>
<dbReference type="HAMAP" id="MF_01561">
    <property type="entry name" value="YcdX_phosphat"/>
    <property type="match status" value="1"/>
</dbReference>
<dbReference type="InterPro" id="IPR023710">
    <property type="entry name" value="Phosphatase_YcdX_put"/>
</dbReference>
<dbReference type="InterPro" id="IPR004013">
    <property type="entry name" value="PHP_dom"/>
</dbReference>
<dbReference type="InterPro" id="IPR050243">
    <property type="entry name" value="PHP_phosphatase"/>
</dbReference>
<dbReference type="InterPro" id="IPR003141">
    <property type="entry name" value="Pol/His_phosphatase_N"/>
</dbReference>
<dbReference type="InterPro" id="IPR016195">
    <property type="entry name" value="Pol/histidinol_Pase-like"/>
</dbReference>
<dbReference type="NCBIfam" id="NF006702">
    <property type="entry name" value="PRK09248.1"/>
    <property type="match status" value="1"/>
</dbReference>
<dbReference type="PANTHER" id="PTHR36928">
    <property type="entry name" value="PHOSPHATASE YCDX-RELATED"/>
    <property type="match status" value="1"/>
</dbReference>
<dbReference type="PANTHER" id="PTHR36928:SF1">
    <property type="entry name" value="PHOSPHATASE YCDX-RELATED"/>
    <property type="match status" value="1"/>
</dbReference>
<dbReference type="Pfam" id="PF02811">
    <property type="entry name" value="PHP"/>
    <property type="match status" value="1"/>
</dbReference>
<dbReference type="SMART" id="SM00481">
    <property type="entry name" value="POLIIIAc"/>
    <property type="match status" value="1"/>
</dbReference>
<dbReference type="SUPFAM" id="SSF89550">
    <property type="entry name" value="PHP domain-like"/>
    <property type="match status" value="1"/>
</dbReference>
<organism>
    <name type="scientific">Shewanella baltica (strain OS155 / ATCC BAA-1091)</name>
    <dbReference type="NCBI Taxonomy" id="325240"/>
    <lineage>
        <taxon>Bacteria</taxon>
        <taxon>Pseudomonadati</taxon>
        <taxon>Pseudomonadota</taxon>
        <taxon>Gammaproteobacteria</taxon>
        <taxon>Alteromonadales</taxon>
        <taxon>Shewanellaceae</taxon>
        <taxon>Shewanella</taxon>
    </lineage>
</organism>
<feature type="chain" id="PRO_1000069025" description="Probable phosphatase Sbal_1472">
    <location>
        <begin position="1"/>
        <end position="254"/>
    </location>
</feature>
<feature type="binding site" evidence="1">
    <location>
        <position position="8"/>
    </location>
    <ligand>
        <name>Zn(2+)</name>
        <dbReference type="ChEBI" id="CHEBI:29105"/>
        <label>1</label>
    </ligand>
</feature>
<feature type="binding site" evidence="1">
    <location>
        <position position="10"/>
    </location>
    <ligand>
        <name>Zn(2+)</name>
        <dbReference type="ChEBI" id="CHEBI:29105"/>
        <label>1</label>
    </ligand>
</feature>
<feature type="binding site" evidence="1">
    <location>
        <position position="16"/>
    </location>
    <ligand>
        <name>Zn(2+)</name>
        <dbReference type="ChEBI" id="CHEBI:29105"/>
        <label>2</label>
    </ligand>
</feature>
<feature type="binding site" evidence="1">
    <location>
        <position position="41"/>
    </location>
    <ligand>
        <name>Zn(2+)</name>
        <dbReference type="ChEBI" id="CHEBI:29105"/>
        <label>2</label>
    </ligand>
</feature>
<feature type="binding site" evidence="1">
    <location>
        <position position="74"/>
    </location>
    <ligand>
        <name>Zn(2+)</name>
        <dbReference type="ChEBI" id="CHEBI:29105"/>
        <label>1</label>
    </ligand>
</feature>
<feature type="binding site" evidence="1">
    <location>
        <position position="74"/>
    </location>
    <ligand>
        <name>Zn(2+)</name>
        <dbReference type="ChEBI" id="CHEBI:29105"/>
        <label>3</label>
    </ligand>
</feature>
<feature type="binding site" evidence="1">
    <location>
        <position position="102"/>
    </location>
    <ligand>
        <name>Zn(2+)</name>
        <dbReference type="ChEBI" id="CHEBI:29105"/>
        <label>3</label>
    </ligand>
</feature>
<feature type="binding site" evidence="1">
    <location>
        <position position="132"/>
    </location>
    <ligand>
        <name>Zn(2+)</name>
        <dbReference type="ChEBI" id="CHEBI:29105"/>
        <label>3</label>
    </ligand>
</feature>
<feature type="binding site" evidence="1">
    <location>
        <position position="193"/>
    </location>
    <ligand>
        <name>Zn(2+)</name>
        <dbReference type="ChEBI" id="CHEBI:29105"/>
        <label>1</label>
    </ligand>
</feature>
<feature type="binding site" evidence="1">
    <location>
        <position position="195"/>
    </location>
    <ligand>
        <name>Zn(2+)</name>
        <dbReference type="ChEBI" id="CHEBI:29105"/>
        <label>2</label>
    </ligand>
</feature>
<keyword id="KW-0378">Hydrolase</keyword>
<keyword id="KW-0479">Metal-binding</keyword>
<keyword id="KW-1185">Reference proteome</keyword>
<keyword id="KW-0862">Zinc</keyword>
<reference key="1">
    <citation type="submission" date="2007-02" db="EMBL/GenBank/DDBJ databases">
        <title>Complete sequence of chromosome of Shewanella baltica OS155.</title>
        <authorList>
            <consortium name="US DOE Joint Genome Institute"/>
            <person name="Copeland A."/>
            <person name="Lucas S."/>
            <person name="Lapidus A."/>
            <person name="Barry K."/>
            <person name="Detter J.C."/>
            <person name="Glavina del Rio T."/>
            <person name="Hammon N."/>
            <person name="Israni S."/>
            <person name="Dalin E."/>
            <person name="Tice H."/>
            <person name="Pitluck S."/>
            <person name="Sims D.R."/>
            <person name="Brettin T."/>
            <person name="Bruce D."/>
            <person name="Han C."/>
            <person name="Tapia R."/>
            <person name="Brainard J."/>
            <person name="Schmutz J."/>
            <person name="Larimer F."/>
            <person name="Land M."/>
            <person name="Hauser L."/>
            <person name="Kyrpides N."/>
            <person name="Mikhailova N."/>
            <person name="Brettar I."/>
            <person name="Klappenbach J."/>
            <person name="Konstantinidis K."/>
            <person name="Rodrigues J."/>
            <person name="Tiedje J."/>
            <person name="Richardson P."/>
        </authorList>
    </citation>
    <scope>NUCLEOTIDE SEQUENCE [LARGE SCALE GENOMIC DNA]</scope>
    <source>
        <strain>OS155 / ATCC BAA-1091</strain>
    </source>
</reference>
<accession>A3D2M7</accession>
<comment type="cofactor">
    <cofactor evidence="1">
        <name>Zn(2+)</name>
        <dbReference type="ChEBI" id="CHEBI:29105"/>
    </cofactor>
    <text evidence="1">Binds 3 Zn(2+) ions per subunit.</text>
</comment>
<comment type="similarity">
    <text evidence="1">Belongs to the PHP family.</text>
</comment>